<protein>
    <recommendedName>
        <fullName>N-arachidonyl glycine receptor</fullName>
        <shortName>NAGly receptor</shortName>
    </recommendedName>
    <alternativeName>
        <fullName>G-protein coupled receptor 18</fullName>
    </alternativeName>
</protein>
<keyword id="KW-1003">Cell membrane</keyword>
<keyword id="KW-0968">Cytoplasmic vesicle</keyword>
<keyword id="KW-1015">Disulfide bond</keyword>
<keyword id="KW-0297">G-protein coupled receptor</keyword>
<keyword id="KW-0325">Glycoprotein</keyword>
<keyword id="KW-0472">Membrane</keyword>
<keyword id="KW-0597">Phosphoprotein</keyword>
<keyword id="KW-0675">Receptor</keyword>
<keyword id="KW-1185">Reference proteome</keyword>
<keyword id="KW-0807">Transducer</keyword>
<keyword id="KW-0812">Transmembrane</keyword>
<keyword id="KW-1133">Transmembrane helix</keyword>
<proteinExistence type="evidence at transcript level"/>
<comment type="function">
    <text evidence="1 2">G protein-coupled receptor (GPCR) that plays a role in diverse physiological processes particularly within the immune and nervous systems. Becomes active when triggered by various endogenous ligands including endocannabinoid N-arachidonyl glycine (NAGly), delta-9-tetrahydrocannabinol or resolvin D2/RvD2 derived from the omega-3 fatty acid docosahexaenoic acid (DHA). Upon RvD2 binding, facilitates the resolution of inflammation, aiding in tissue repair and homeostasis. Mechanistically, RvD2 ligation initiates Galphas protein coupling, activation of cAMP-PKA signaling pathway and phosphorylation of STAT3, leading to RvD2-stimulated macrophage phagocytosis. Mediates NAGly-induced process of reorganization of actin filaments and induction of acrosomal exocytosis (By similarity). Activation by N-arachidonoyl glycine (NAGly) can also induce apoptosis in macrophages (By similarity). Plays a role in homeostasis of CD8+ subsets of intraepithelial lymphocytes (IELs) (CD8alphaalpha and CD8alphabeta IELs) in small intestine by supporting preferential migration of CD8alphaalpha T-cells to intraepithelial compartment over lamina propria compartment, and by mediating their reconstitution into small intestine after bone marrow transplant (By similarity). Participates also in hypotensive responses, mediating reduction in intraocular and blood pressure (By similarity).</text>
</comment>
<comment type="subcellular location">
    <subcellularLocation>
        <location evidence="1">Cell membrane</location>
        <topology evidence="3">Multi-pass membrane protein</topology>
    </subcellularLocation>
    <subcellularLocation>
        <location evidence="1">Cytoplasmic vesicle membrane</location>
    </subcellularLocation>
</comment>
<comment type="similarity">
    <text evidence="4">Belongs to the G-protein coupled receptor 1 family.</text>
</comment>
<accession>Q3T0E9</accession>
<sequence length="332" mass="37949">MTTPHSQAQPGLPIDPHPDEYKVAALVFYSCIFIIGLFVNVTALWVFSCTTKKRTTVTVYMMNVALLDLVFIMSLPFRMLYYAKGEWPFGEYFCRILGALTVFYPSIALWLLAFISADRYMAIVQPKYAKELKNTCKAVMACVGVWIMTLTTTIPLLLLYEDPDTASSTPPTCLKISDIIYLKAINALNFTRLIFFFLIPLFIMIGCYLVIIHSLLHGKTSKLKPKVKEKSIRIIITLMVQVLVCFMPFHICFAFLMLGGDENSYNPWGAFTTFLMNLSTCLDVILYYIVSKQFQARVISVMLYRNYLRSVRRKSFRSGSLRSLSNINSEML</sequence>
<gene>
    <name type="primary">GPR18</name>
</gene>
<feature type="chain" id="PRO_0000245013" description="N-arachidonyl glycine receptor">
    <location>
        <begin position="1"/>
        <end position="332"/>
    </location>
</feature>
<feature type="topological domain" description="Extracellular" evidence="3">
    <location>
        <begin position="1"/>
        <end position="26"/>
    </location>
</feature>
<feature type="transmembrane region" description="Helical; Name=1" evidence="3">
    <location>
        <begin position="27"/>
        <end position="47"/>
    </location>
</feature>
<feature type="topological domain" description="Cytoplasmic" evidence="3">
    <location>
        <begin position="48"/>
        <end position="56"/>
    </location>
</feature>
<feature type="transmembrane region" description="Helical; Name=2" evidence="3">
    <location>
        <begin position="57"/>
        <end position="77"/>
    </location>
</feature>
<feature type="topological domain" description="Extracellular" evidence="3">
    <location>
        <begin position="78"/>
        <end position="95"/>
    </location>
</feature>
<feature type="transmembrane region" description="Helical; Name=3" evidence="3">
    <location>
        <begin position="96"/>
        <end position="116"/>
    </location>
</feature>
<feature type="topological domain" description="Cytoplasmic" evidence="3">
    <location>
        <begin position="117"/>
        <end position="138"/>
    </location>
</feature>
<feature type="transmembrane region" description="Helical; Name=4" evidence="3">
    <location>
        <begin position="139"/>
        <end position="159"/>
    </location>
</feature>
<feature type="topological domain" description="Extracellular" evidence="3">
    <location>
        <begin position="160"/>
        <end position="192"/>
    </location>
</feature>
<feature type="transmembrane region" description="Helical; Name=5" evidence="3">
    <location>
        <begin position="193"/>
        <end position="213"/>
    </location>
</feature>
<feature type="topological domain" description="Cytoplasmic" evidence="3">
    <location>
        <begin position="214"/>
        <end position="233"/>
    </location>
</feature>
<feature type="transmembrane region" description="Helical; Name=6" evidence="3">
    <location>
        <begin position="234"/>
        <end position="254"/>
    </location>
</feature>
<feature type="topological domain" description="Extracellular" evidence="3">
    <location>
        <begin position="255"/>
        <end position="269"/>
    </location>
</feature>
<feature type="transmembrane region" description="Helical; Name=7" evidence="3">
    <location>
        <begin position="270"/>
        <end position="290"/>
    </location>
</feature>
<feature type="topological domain" description="Cytoplasmic" evidence="3">
    <location>
        <begin position="291"/>
        <end position="332"/>
    </location>
</feature>
<feature type="modified residue" description="Phosphoserine" evidence="2">
    <location>
        <position position="323"/>
    </location>
</feature>
<feature type="glycosylation site" description="N-linked (GlcNAc...) asparagine" evidence="3">
    <location>
        <position position="189"/>
    </location>
</feature>
<feature type="disulfide bond" evidence="4">
    <location>
        <begin position="94"/>
        <end position="173"/>
    </location>
</feature>
<evidence type="ECO:0000250" key="1">
    <source>
        <dbReference type="UniProtKB" id="Q14330"/>
    </source>
</evidence>
<evidence type="ECO:0000250" key="2">
    <source>
        <dbReference type="UniProtKB" id="Q8K1Z6"/>
    </source>
</evidence>
<evidence type="ECO:0000255" key="3"/>
<evidence type="ECO:0000255" key="4">
    <source>
        <dbReference type="PROSITE-ProRule" id="PRU00521"/>
    </source>
</evidence>
<name>GPR18_BOVIN</name>
<dbReference type="EMBL" id="BC102421">
    <property type="protein sequence ID" value="AAI02422.1"/>
    <property type="molecule type" value="mRNA"/>
</dbReference>
<dbReference type="RefSeq" id="NP_001029861.1">
    <property type="nucleotide sequence ID" value="NM_001034689.2"/>
</dbReference>
<dbReference type="RefSeq" id="XP_059748083.1">
    <property type="nucleotide sequence ID" value="XM_059892100.1"/>
</dbReference>
<dbReference type="RefSeq" id="XP_059748084.1">
    <property type="nucleotide sequence ID" value="XM_059892101.1"/>
</dbReference>
<dbReference type="RefSeq" id="XP_059748085.1">
    <property type="nucleotide sequence ID" value="XM_059892102.1"/>
</dbReference>
<dbReference type="SMR" id="Q3T0E9"/>
<dbReference type="FunCoup" id="Q3T0E9">
    <property type="interactions" value="539"/>
</dbReference>
<dbReference type="STRING" id="9913.ENSBTAP00000007469"/>
<dbReference type="GlyCosmos" id="Q3T0E9">
    <property type="glycosylation" value="1 site, No reported glycans"/>
</dbReference>
<dbReference type="GlyGen" id="Q3T0E9">
    <property type="glycosylation" value="1 site"/>
</dbReference>
<dbReference type="PaxDb" id="9913-ENSBTAP00000007469"/>
<dbReference type="Ensembl" id="ENSBTAT00000007469.7">
    <property type="protein sequence ID" value="ENSBTAP00000007469.5"/>
    <property type="gene ID" value="ENSBTAG00000002240.7"/>
</dbReference>
<dbReference type="GeneID" id="540038"/>
<dbReference type="KEGG" id="bta:540038"/>
<dbReference type="CTD" id="2841"/>
<dbReference type="VEuPathDB" id="HostDB:ENSBTAG00000002240"/>
<dbReference type="VGNC" id="VGNC:29574">
    <property type="gene designation" value="GPR18"/>
</dbReference>
<dbReference type="eggNOG" id="ENOG502QT1V">
    <property type="taxonomic scope" value="Eukaryota"/>
</dbReference>
<dbReference type="GeneTree" id="ENSGT01130000278275"/>
<dbReference type="HOGENOM" id="CLU_009579_8_2_1"/>
<dbReference type="InParanoid" id="Q3T0E9"/>
<dbReference type="OMA" id="TITIYMM"/>
<dbReference type="OrthoDB" id="5952950at2759"/>
<dbReference type="TreeFam" id="TF330775"/>
<dbReference type="Reactome" id="R-BTA-373076">
    <property type="pathway name" value="Class A/1 (Rhodopsin-like receptors)"/>
</dbReference>
<dbReference type="Reactome" id="R-BTA-418594">
    <property type="pathway name" value="G alpha (i) signalling events"/>
</dbReference>
<dbReference type="Proteomes" id="UP000009136">
    <property type="component" value="Chromosome 12"/>
</dbReference>
<dbReference type="Bgee" id="ENSBTAG00000002240">
    <property type="expression patterns" value="Expressed in semen and 80 other cell types or tissues"/>
</dbReference>
<dbReference type="GO" id="GO:0030659">
    <property type="term" value="C:cytoplasmic vesicle membrane"/>
    <property type="evidence" value="ECO:0007669"/>
    <property type="project" value="UniProtKB-SubCell"/>
</dbReference>
<dbReference type="GO" id="GO:0005886">
    <property type="term" value="C:plasma membrane"/>
    <property type="evidence" value="ECO:0000318"/>
    <property type="project" value="GO_Central"/>
</dbReference>
<dbReference type="GO" id="GO:0004930">
    <property type="term" value="F:G protein-coupled receptor activity"/>
    <property type="evidence" value="ECO:0000318"/>
    <property type="project" value="GO_Central"/>
</dbReference>
<dbReference type="GO" id="GO:0002300">
    <property type="term" value="P:CD8-positive, alpha-beta intraepithelial T cell differentiation"/>
    <property type="evidence" value="ECO:0007669"/>
    <property type="project" value="Ensembl"/>
</dbReference>
<dbReference type="GO" id="GO:0002305">
    <property type="term" value="P:CD8-positive, gamma-delta intraepithelial T cell differentiation"/>
    <property type="evidence" value="ECO:0007669"/>
    <property type="project" value="Ensembl"/>
</dbReference>
<dbReference type="GO" id="GO:0007186">
    <property type="term" value="P:G protein-coupled receptor signaling pathway"/>
    <property type="evidence" value="ECO:0000318"/>
    <property type="project" value="GO_Central"/>
</dbReference>
<dbReference type="GO" id="GO:0002689">
    <property type="term" value="P:negative regulation of leukocyte chemotaxis"/>
    <property type="evidence" value="ECO:0007669"/>
    <property type="project" value="Ensembl"/>
</dbReference>
<dbReference type="GO" id="GO:0032720">
    <property type="term" value="P:negative regulation of tumor necrosis factor production"/>
    <property type="evidence" value="ECO:0007669"/>
    <property type="project" value="Ensembl"/>
</dbReference>
<dbReference type="FunFam" id="1.20.1070.10:FF:000176">
    <property type="entry name" value="N-arachidonyl glycine receptor"/>
    <property type="match status" value="1"/>
</dbReference>
<dbReference type="Gene3D" id="1.20.1070.10">
    <property type="entry name" value="Rhodopsin 7-helix transmembrane proteins"/>
    <property type="match status" value="1"/>
</dbReference>
<dbReference type="InterPro" id="IPR000276">
    <property type="entry name" value="GPCR_Rhodpsn"/>
</dbReference>
<dbReference type="InterPro" id="IPR017452">
    <property type="entry name" value="GPCR_Rhodpsn_7TM"/>
</dbReference>
<dbReference type="PANTHER" id="PTHR24232">
    <property type="entry name" value="G-PROTEIN COUPLED RECEPTOR"/>
    <property type="match status" value="1"/>
</dbReference>
<dbReference type="PANTHER" id="PTHR24232:SF1">
    <property type="entry name" value="N-ARACHIDONYL GLYCINE RECEPTOR"/>
    <property type="match status" value="1"/>
</dbReference>
<dbReference type="Pfam" id="PF00001">
    <property type="entry name" value="7tm_1"/>
    <property type="match status" value="1"/>
</dbReference>
<dbReference type="PRINTS" id="PR00237">
    <property type="entry name" value="GPCRRHODOPSN"/>
</dbReference>
<dbReference type="PRINTS" id="PR01157">
    <property type="entry name" value="P2YPURNOCPTR"/>
</dbReference>
<dbReference type="SUPFAM" id="SSF81321">
    <property type="entry name" value="Family A G protein-coupled receptor-like"/>
    <property type="match status" value="1"/>
</dbReference>
<dbReference type="PROSITE" id="PS00237">
    <property type="entry name" value="G_PROTEIN_RECEP_F1_1"/>
    <property type="match status" value="1"/>
</dbReference>
<dbReference type="PROSITE" id="PS50262">
    <property type="entry name" value="G_PROTEIN_RECEP_F1_2"/>
    <property type="match status" value="1"/>
</dbReference>
<organism>
    <name type="scientific">Bos taurus</name>
    <name type="common">Bovine</name>
    <dbReference type="NCBI Taxonomy" id="9913"/>
    <lineage>
        <taxon>Eukaryota</taxon>
        <taxon>Metazoa</taxon>
        <taxon>Chordata</taxon>
        <taxon>Craniata</taxon>
        <taxon>Vertebrata</taxon>
        <taxon>Euteleostomi</taxon>
        <taxon>Mammalia</taxon>
        <taxon>Eutheria</taxon>
        <taxon>Laurasiatheria</taxon>
        <taxon>Artiodactyla</taxon>
        <taxon>Ruminantia</taxon>
        <taxon>Pecora</taxon>
        <taxon>Bovidae</taxon>
        <taxon>Bovinae</taxon>
        <taxon>Bos</taxon>
    </lineage>
</organism>
<reference key="1">
    <citation type="submission" date="2005-08" db="EMBL/GenBank/DDBJ databases">
        <authorList>
            <consortium name="NIH - Mammalian Gene Collection (MGC) project"/>
        </authorList>
    </citation>
    <scope>NUCLEOTIDE SEQUENCE [LARGE SCALE MRNA]</scope>
    <source>
        <strain>Crossbred X Angus</strain>
        <tissue>Ileum</tissue>
    </source>
</reference>